<evidence type="ECO:0000255" key="1">
    <source>
        <dbReference type="HAMAP-Rule" id="MF_01356"/>
    </source>
</evidence>
<dbReference type="EC" id="7.1.1.-" evidence="1"/>
<dbReference type="EMBL" id="CP001016">
    <property type="protein sequence ID" value="ACB96009.1"/>
    <property type="molecule type" value="Genomic_DNA"/>
</dbReference>
<dbReference type="RefSeq" id="WP_012385362.1">
    <property type="nucleotide sequence ID" value="NC_010581.1"/>
</dbReference>
<dbReference type="SMR" id="B2IHW6"/>
<dbReference type="STRING" id="395963.Bind_2398"/>
<dbReference type="KEGG" id="bid:Bind_2398"/>
<dbReference type="eggNOG" id="COG0377">
    <property type="taxonomic scope" value="Bacteria"/>
</dbReference>
<dbReference type="HOGENOM" id="CLU_055737_7_0_5"/>
<dbReference type="OrthoDB" id="9786737at2"/>
<dbReference type="Proteomes" id="UP000001695">
    <property type="component" value="Chromosome"/>
</dbReference>
<dbReference type="GO" id="GO:0005886">
    <property type="term" value="C:plasma membrane"/>
    <property type="evidence" value="ECO:0007669"/>
    <property type="project" value="UniProtKB-SubCell"/>
</dbReference>
<dbReference type="GO" id="GO:0045271">
    <property type="term" value="C:respiratory chain complex I"/>
    <property type="evidence" value="ECO:0007669"/>
    <property type="project" value="TreeGrafter"/>
</dbReference>
<dbReference type="GO" id="GO:0051539">
    <property type="term" value="F:4 iron, 4 sulfur cluster binding"/>
    <property type="evidence" value="ECO:0007669"/>
    <property type="project" value="UniProtKB-KW"/>
</dbReference>
<dbReference type="GO" id="GO:0005506">
    <property type="term" value="F:iron ion binding"/>
    <property type="evidence" value="ECO:0007669"/>
    <property type="project" value="UniProtKB-UniRule"/>
</dbReference>
<dbReference type="GO" id="GO:0008137">
    <property type="term" value="F:NADH dehydrogenase (ubiquinone) activity"/>
    <property type="evidence" value="ECO:0007669"/>
    <property type="project" value="InterPro"/>
</dbReference>
<dbReference type="GO" id="GO:0050136">
    <property type="term" value="F:NADH:ubiquinone reductase (non-electrogenic) activity"/>
    <property type="evidence" value="ECO:0007669"/>
    <property type="project" value="UniProtKB-UniRule"/>
</dbReference>
<dbReference type="GO" id="GO:0048038">
    <property type="term" value="F:quinone binding"/>
    <property type="evidence" value="ECO:0007669"/>
    <property type="project" value="UniProtKB-KW"/>
</dbReference>
<dbReference type="GO" id="GO:0009060">
    <property type="term" value="P:aerobic respiration"/>
    <property type="evidence" value="ECO:0007669"/>
    <property type="project" value="TreeGrafter"/>
</dbReference>
<dbReference type="GO" id="GO:0015990">
    <property type="term" value="P:electron transport coupled proton transport"/>
    <property type="evidence" value="ECO:0007669"/>
    <property type="project" value="TreeGrafter"/>
</dbReference>
<dbReference type="FunFam" id="3.40.50.12280:FF:000001">
    <property type="entry name" value="NADH-quinone oxidoreductase subunit B 2"/>
    <property type="match status" value="1"/>
</dbReference>
<dbReference type="Gene3D" id="3.40.50.12280">
    <property type="match status" value="1"/>
</dbReference>
<dbReference type="HAMAP" id="MF_01356">
    <property type="entry name" value="NDH1_NuoB"/>
    <property type="match status" value="1"/>
</dbReference>
<dbReference type="InterPro" id="IPR006137">
    <property type="entry name" value="NADH_UbQ_OxRdtase-like_20kDa"/>
</dbReference>
<dbReference type="InterPro" id="IPR006138">
    <property type="entry name" value="NADH_UQ_OxRdtase_20Kd_su"/>
</dbReference>
<dbReference type="NCBIfam" id="TIGR01957">
    <property type="entry name" value="nuoB_fam"/>
    <property type="match status" value="1"/>
</dbReference>
<dbReference type="NCBIfam" id="NF005012">
    <property type="entry name" value="PRK06411.1"/>
    <property type="match status" value="1"/>
</dbReference>
<dbReference type="PANTHER" id="PTHR11995">
    <property type="entry name" value="NADH DEHYDROGENASE"/>
    <property type="match status" value="1"/>
</dbReference>
<dbReference type="PANTHER" id="PTHR11995:SF14">
    <property type="entry name" value="NADH DEHYDROGENASE [UBIQUINONE] IRON-SULFUR PROTEIN 7, MITOCHONDRIAL"/>
    <property type="match status" value="1"/>
</dbReference>
<dbReference type="Pfam" id="PF01058">
    <property type="entry name" value="Oxidored_q6"/>
    <property type="match status" value="1"/>
</dbReference>
<dbReference type="SUPFAM" id="SSF56770">
    <property type="entry name" value="HydA/Nqo6-like"/>
    <property type="match status" value="1"/>
</dbReference>
<dbReference type="PROSITE" id="PS01150">
    <property type="entry name" value="COMPLEX1_20K"/>
    <property type="match status" value="1"/>
</dbReference>
<comment type="function">
    <text evidence="1">NDH-1 shuttles electrons from NADH, via FMN and iron-sulfur (Fe-S) centers, to quinones in the respiratory chain. The immediate electron acceptor for the enzyme in this species is believed to be ubiquinone. Couples the redox reaction to proton translocation (for every two electrons transferred, four hydrogen ions are translocated across the cytoplasmic membrane), and thus conserves the redox energy in a proton gradient.</text>
</comment>
<comment type="catalytic activity">
    <reaction evidence="1">
        <text>a quinone + NADH + 5 H(+)(in) = a quinol + NAD(+) + 4 H(+)(out)</text>
        <dbReference type="Rhea" id="RHEA:57888"/>
        <dbReference type="ChEBI" id="CHEBI:15378"/>
        <dbReference type="ChEBI" id="CHEBI:24646"/>
        <dbReference type="ChEBI" id="CHEBI:57540"/>
        <dbReference type="ChEBI" id="CHEBI:57945"/>
        <dbReference type="ChEBI" id="CHEBI:132124"/>
    </reaction>
</comment>
<comment type="cofactor">
    <cofactor evidence="1">
        <name>[4Fe-4S] cluster</name>
        <dbReference type="ChEBI" id="CHEBI:49883"/>
    </cofactor>
    <text evidence="1">Binds 1 [4Fe-4S] cluster.</text>
</comment>
<comment type="subunit">
    <text evidence="1">NDH-1 is composed of 14 different subunits. Subunits NuoB, C, D, E, F, and G constitute the peripheral sector of the complex.</text>
</comment>
<comment type="subcellular location">
    <subcellularLocation>
        <location evidence="1">Cell inner membrane</location>
        <topology evidence="1">Peripheral membrane protein</topology>
        <orientation evidence="1">Cytoplasmic side</orientation>
    </subcellularLocation>
</comment>
<comment type="similarity">
    <text evidence="1">Belongs to the complex I 20 kDa subunit family.</text>
</comment>
<accession>B2IHW6</accession>
<feature type="chain" id="PRO_0000376150" description="NADH-quinone oxidoreductase subunit B">
    <location>
        <begin position="1"/>
        <end position="180"/>
    </location>
</feature>
<feature type="binding site" evidence="1">
    <location>
        <position position="59"/>
    </location>
    <ligand>
        <name>[4Fe-4S] cluster</name>
        <dbReference type="ChEBI" id="CHEBI:49883"/>
    </ligand>
</feature>
<feature type="binding site" evidence="1">
    <location>
        <position position="60"/>
    </location>
    <ligand>
        <name>[4Fe-4S] cluster</name>
        <dbReference type="ChEBI" id="CHEBI:49883"/>
    </ligand>
</feature>
<feature type="binding site" evidence="1">
    <location>
        <position position="124"/>
    </location>
    <ligand>
        <name>[4Fe-4S] cluster</name>
        <dbReference type="ChEBI" id="CHEBI:49883"/>
    </ligand>
</feature>
<feature type="binding site" evidence="1">
    <location>
        <position position="154"/>
    </location>
    <ligand>
        <name>[4Fe-4S] cluster</name>
        <dbReference type="ChEBI" id="CHEBI:49883"/>
    </ligand>
</feature>
<protein>
    <recommendedName>
        <fullName evidence="1">NADH-quinone oxidoreductase subunit B</fullName>
        <ecNumber evidence="1">7.1.1.-</ecNumber>
    </recommendedName>
    <alternativeName>
        <fullName evidence="1">NADH dehydrogenase I subunit B</fullName>
    </alternativeName>
    <alternativeName>
        <fullName evidence="1">NDH-1 subunit B</fullName>
    </alternativeName>
</protein>
<gene>
    <name evidence="1" type="primary">nuoB</name>
    <name type="ordered locus">Bind_2398</name>
</gene>
<sequence>MGLIATPQPVVGTPPAQDNYFLSINDQLADKGFLVTSTDELINWARTGSLMWMTFGLACCAVEMMQMSMPRYDCERFGFAPRGSPRQSDVMIVAGTLTNKMAPALRKVYDQMPEPRYVISMGSCANGGGYYHYSYSVVRGCDRIVPVDIYVPGCPPSAEALLYGVLLLQKKIRRTGTIER</sequence>
<proteinExistence type="inferred from homology"/>
<name>NUOB_BEII9</name>
<keyword id="KW-0004">4Fe-4S</keyword>
<keyword id="KW-0997">Cell inner membrane</keyword>
<keyword id="KW-1003">Cell membrane</keyword>
<keyword id="KW-0408">Iron</keyword>
<keyword id="KW-0411">Iron-sulfur</keyword>
<keyword id="KW-0472">Membrane</keyword>
<keyword id="KW-0479">Metal-binding</keyword>
<keyword id="KW-0520">NAD</keyword>
<keyword id="KW-0874">Quinone</keyword>
<keyword id="KW-1185">Reference proteome</keyword>
<keyword id="KW-1278">Translocase</keyword>
<keyword id="KW-0813">Transport</keyword>
<keyword id="KW-0830">Ubiquinone</keyword>
<organism>
    <name type="scientific">Beijerinckia indica subsp. indica (strain ATCC 9039 / DSM 1715 / NCIMB 8712)</name>
    <dbReference type="NCBI Taxonomy" id="395963"/>
    <lineage>
        <taxon>Bacteria</taxon>
        <taxon>Pseudomonadati</taxon>
        <taxon>Pseudomonadota</taxon>
        <taxon>Alphaproteobacteria</taxon>
        <taxon>Hyphomicrobiales</taxon>
        <taxon>Beijerinckiaceae</taxon>
        <taxon>Beijerinckia</taxon>
    </lineage>
</organism>
<reference key="1">
    <citation type="journal article" date="2010" name="J. Bacteriol.">
        <title>Complete genome sequence of Beijerinckia indica subsp. indica.</title>
        <authorList>
            <person name="Tamas I."/>
            <person name="Dedysh S.N."/>
            <person name="Liesack W."/>
            <person name="Stott M.B."/>
            <person name="Alam M."/>
            <person name="Murrell J.C."/>
            <person name="Dunfield P.F."/>
        </authorList>
    </citation>
    <scope>NUCLEOTIDE SEQUENCE [LARGE SCALE GENOMIC DNA]</scope>
    <source>
        <strain>ATCC 9039 / DSM 1715 / NCIMB 8712</strain>
    </source>
</reference>